<accession>A8FA63</accession>
<name>ACPS_BACP2</name>
<protein>
    <recommendedName>
        <fullName evidence="1">Holo-[acyl-carrier-protein] synthase</fullName>
        <shortName evidence="1">Holo-ACP synthase</shortName>
        <ecNumber evidence="1">2.7.8.7</ecNumber>
    </recommendedName>
    <alternativeName>
        <fullName evidence="1">4'-phosphopantetheinyl transferase AcpS</fullName>
    </alternativeName>
</protein>
<gene>
    <name evidence="1" type="primary">acpS</name>
    <name type="ordered locus">BPUM_0435</name>
</gene>
<feature type="chain" id="PRO_1000057667" description="Holo-[acyl-carrier-protein] synthase">
    <location>
        <begin position="1"/>
        <end position="121"/>
    </location>
</feature>
<feature type="binding site" evidence="1">
    <location>
        <position position="8"/>
    </location>
    <ligand>
        <name>Mg(2+)</name>
        <dbReference type="ChEBI" id="CHEBI:18420"/>
    </ligand>
</feature>
<feature type="binding site" evidence="1">
    <location>
        <position position="58"/>
    </location>
    <ligand>
        <name>Mg(2+)</name>
        <dbReference type="ChEBI" id="CHEBI:18420"/>
    </ligand>
</feature>
<evidence type="ECO:0000255" key="1">
    <source>
        <dbReference type="HAMAP-Rule" id="MF_00101"/>
    </source>
</evidence>
<organism>
    <name type="scientific">Bacillus pumilus (strain SAFR-032)</name>
    <dbReference type="NCBI Taxonomy" id="315750"/>
    <lineage>
        <taxon>Bacteria</taxon>
        <taxon>Bacillati</taxon>
        <taxon>Bacillota</taxon>
        <taxon>Bacilli</taxon>
        <taxon>Bacillales</taxon>
        <taxon>Bacillaceae</taxon>
        <taxon>Bacillus</taxon>
    </lineage>
</organism>
<comment type="function">
    <text evidence="1">Transfers the 4'-phosphopantetheine moiety from coenzyme A to a Ser of acyl-carrier-protein.</text>
</comment>
<comment type="catalytic activity">
    <reaction evidence="1">
        <text>apo-[ACP] + CoA = holo-[ACP] + adenosine 3',5'-bisphosphate + H(+)</text>
        <dbReference type="Rhea" id="RHEA:12068"/>
        <dbReference type="Rhea" id="RHEA-COMP:9685"/>
        <dbReference type="Rhea" id="RHEA-COMP:9690"/>
        <dbReference type="ChEBI" id="CHEBI:15378"/>
        <dbReference type="ChEBI" id="CHEBI:29999"/>
        <dbReference type="ChEBI" id="CHEBI:57287"/>
        <dbReference type="ChEBI" id="CHEBI:58343"/>
        <dbReference type="ChEBI" id="CHEBI:64479"/>
        <dbReference type="EC" id="2.7.8.7"/>
    </reaction>
</comment>
<comment type="cofactor">
    <cofactor evidence="1">
        <name>Mg(2+)</name>
        <dbReference type="ChEBI" id="CHEBI:18420"/>
    </cofactor>
</comment>
<comment type="subcellular location">
    <subcellularLocation>
        <location evidence="1">Cytoplasm</location>
    </subcellularLocation>
</comment>
<comment type="similarity">
    <text evidence="1">Belongs to the P-Pant transferase superfamily. AcpS family.</text>
</comment>
<reference key="1">
    <citation type="journal article" date="2007" name="PLoS ONE">
        <title>Paradoxical DNA repair and peroxide resistance gene conservation in Bacillus pumilus SAFR-032.</title>
        <authorList>
            <person name="Gioia J."/>
            <person name="Yerrapragada S."/>
            <person name="Qin X."/>
            <person name="Jiang H."/>
            <person name="Igboeli O.C."/>
            <person name="Muzny D."/>
            <person name="Dugan-Rocha S."/>
            <person name="Ding Y."/>
            <person name="Hawes A."/>
            <person name="Liu W."/>
            <person name="Perez L."/>
            <person name="Kovar C."/>
            <person name="Dinh H."/>
            <person name="Lee S."/>
            <person name="Nazareth L."/>
            <person name="Blyth P."/>
            <person name="Holder M."/>
            <person name="Buhay C."/>
            <person name="Tirumalai M.R."/>
            <person name="Liu Y."/>
            <person name="Dasgupta I."/>
            <person name="Bokhetache L."/>
            <person name="Fujita M."/>
            <person name="Karouia F."/>
            <person name="Eswara Moorthy P."/>
            <person name="Siefert J."/>
            <person name="Uzman A."/>
            <person name="Buzumbo P."/>
            <person name="Verma A."/>
            <person name="Zwiya H."/>
            <person name="McWilliams B.D."/>
            <person name="Olowu A."/>
            <person name="Clinkenbeard K.D."/>
            <person name="Newcombe D."/>
            <person name="Golebiewski L."/>
            <person name="Petrosino J.F."/>
            <person name="Nicholson W.L."/>
            <person name="Fox G.E."/>
            <person name="Venkateswaran K."/>
            <person name="Highlander S.K."/>
            <person name="Weinstock G.M."/>
        </authorList>
    </citation>
    <scope>NUCLEOTIDE SEQUENCE [LARGE SCALE GENOMIC DNA]</scope>
    <source>
        <strain>SAFR-032</strain>
    </source>
</reference>
<dbReference type="EC" id="2.7.8.7" evidence="1"/>
<dbReference type="EMBL" id="CP000813">
    <property type="protein sequence ID" value="ABV61130.1"/>
    <property type="molecule type" value="Genomic_DNA"/>
</dbReference>
<dbReference type="RefSeq" id="WP_012008992.1">
    <property type="nucleotide sequence ID" value="NC_009848.4"/>
</dbReference>
<dbReference type="SMR" id="A8FA63"/>
<dbReference type="STRING" id="315750.BPUM_0435"/>
<dbReference type="GeneID" id="5619687"/>
<dbReference type="KEGG" id="bpu:BPUM_0435"/>
<dbReference type="eggNOG" id="COG0736">
    <property type="taxonomic scope" value="Bacteria"/>
</dbReference>
<dbReference type="HOGENOM" id="CLU_089696_1_2_9"/>
<dbReference type="OrthoDB" id="517356at2"/>
<dbReference type="Proteomes" id="UP000001355">
    <property type="component" value="Chromosome"/>
</dbReference>
<dbReference type="GO" id="GO:0005829">
    <property type="term" value="C:cytosol"/>
    <property type="evidence" value="ECO:0007669"/>
    <property type="project" value="TreeGrafter"/>
</dbReference>
<dbReference type="GO" id="GO:0008897">
    <property type="term" value="F:holo-[acyl-carrier-protein] synthase activity"/>
    <property type="evidence" value="ECO:0007669"/>
    <property type="project" value="UniProtKB-UniRule"/>
</dbReference>
<dbReference type="GO" id="GO:0000287">
    <property type="term" value="F:magnesium ion binding"/>
    <property type="evidence" value="ECO:0007669"/>
    <property type="project" value="UniProtKB-UniRule"/>
</dbReference>
<dbReference type="GO" id="GO:0006633">
    <property type="term" value="P:fatty acid biosynthetic process"/>
    <property type="evidence" value="ECO:0007669"/>
    <property type="project" value="UniProtKB-UniRule"/>
</dbReference>
<dbReference type="GO" id="GO:0019878">
    <property type="term" value="P:lysine biosynthetic process via aminoadipic acid"/>
    <property type="evidence" value="ECO:0007669"/>
    <property type="project" value="TreeGrafter"/>
</dbReference>
<dbReference type="Gene3D" id="3.90.470.20">
    <property type="entry name" value="4'-phosphopantetheinyl transferase domain"/>
    <property type="match status" value="1"/>
</dbReference>
<dbReference type="HAMAP" id="MF_00101">
    <property type="entry name" value="AcpS"/>
    <property type="match status" value="1"/>
</dbReference>
<dbReference type="InterPro" id="IPR008278">
    <property type="entry name" value="4-PPantetheinyl_Trfase_dom"/>
</dbReference>
<dbReference type="InterPro" id="IPR037143">
    <property type="entry name" value="4-PPantetheinyl_Trfase_dom_sf"/>
</dbReference>
<dbReference type="InterPro" id="IPR002582">
    <property type="entry name" value="ACPS"/>
</dbReference>
<dbReference type="InterPro" id="IPR050559">
    <property type="entry name" value="P-Pant_transferase_sf"/>
</dbReference>
<dbReference type="InterPro" id="IPR004568">
    <property type="entry name" value="Ppantetheine-prot_Trfase_dom"/>
</dbReference>
<dbReference type="NCBIfam" id="TIGR00516">
    <property type="entry name" value="acpS"/>
    <property type="match status" value="1"/>
</dbReference>
<dbReference type="NCBIfam" id="TIGR00556">
    <property type="entry name" value="pantethn_trn"/>
    <property type="match status" value="1"/>
</dbReference>
<dbReference type="PANTHER" id="PTHR12215:SF10">
    <property type="entry name" value="L-AMINOADIPATE-SEMIALDEHYDE DEHYDROGENASE-PHOSPHOPANTETHEINYL TRANSFERASE"/>
    <property type="match status" value="1"/>
</dbReference>
<dbReference type="PANTHER" id="PTHR12215">
    <property type="entry name" value="PHOSPHOPANTETHEINE TRANSFERASE"/>
    <property type="match status" value="1"/>
</dbReference>
<dbReference type="Pfam" id="PF01648">
    <property type="entry name" value="ACPS"/>
    <property type="match status" value="1"/>
</dbReference>
<dbReference type="SUPFAM" id="SSF56214">
    <property type="entry name" value="4'-phosphopantetheinyl transferase"/>
    <property type="match status" value="1"/>
</dbReference>
<keyword id="KW-0963">Cytoplasm</keyword>
<keyword id="KW-0275">Fatty acid biosynthesis</keyword>
<keyword id="KW-0276">Fatty acid metabolism</keyword>
<keyword id="KW-0444">Lipid biosynthesis</keyword>
<keyword id="KW-0443">Lipid metabolism</keyword>
<keyword id="KW-0460">Magnesium</keyword>
<keyword id="KW-0479">Metal-binding</keyword>
<keyword id="KW-0808">Transferase</keyword>
<proteinExistence type="inferred from homology"/>
<sequence>MIKGIGLDIVEINRLAHVLSRQPRLPERILTLNEQDIFHALSEKRQLEFLAGRFAAKEAFAKAYGTGIGRHLSFHDIEIQKDEHGKPFIKSEKTKDDQVHVSITHTKEYAAAQVLIERLSS</sequence>